<comment type="function">
    <text evidence="1">Single strand-specific metallo-endoribonuclease involved in late-stage 70S ribosome quality control and in maturation of the 3' terminus of the 16S rRNA.</text>
</comment>
<comment type="cofactor">
    <cofactor evidence="1">
        <name>Zn(2+)</name>
        <dbReference type="ChEBI" id="CHEBI:29105"/>
    </cofactor>
    <text evidence="1">Binds 1 zinc ion.</text>
</comment>
<comment type="subcellular location">
    <subcellularLocation>
        <location evidence="1">Cytoplasm</location>
    </subcellularLocation>
</comment>
<comment type="similarity">
    <text evidence="1">Belongs to the endoribonuclease YbeY family.</text>
</comment>
<accession>Q5WHE2</accession>
<organism>
    <name type="scientific">Shouchella clausii (strain KSM-K16)</name>
    <name type="common">Alkalihalobacillus clausii</name>
    <dbReference type="NCBI Taxonomy" id="66692"/>
    <lineage>
        <taxon>Bacteria</taxon>
        <taxon>Bacillati</taxon>
        <taxon>Bacillota</taxon>
        <taxon>Bacilli</taxon>
        <taxon>Bacillales</taxon>
        <taxon>Bacillaceae</taxon>
        <taxon>Shouchella</taxon>
    </lineage>
</organism>
<evidence type="ECO:0000255" key="1">
    <source>
        <dbReference type="HAMAP-Rule" id="MF_00009"/>
    </source>
</evidence>
<name>YBEY_SHOC1</name>
<gene>
    <name evidence="1" type="primary">ybeY</name>
    <name type="ordered locus">ABC1678</name>
</gene>
<reference key="1">
    <citation type="submission" date="2003-10" db="EMBL/GenBank/DDBJ databases">
        <title>The complete genome sequence of the alkaliphilic Bacillus clausii KSM-K16.</title>
        <authorList>
            <person name="Takaki Y."/>
            <person name="Kageyama Y."/>
            <person name="Shimamura S."/>
            <person name="Suzuki H."/>
            <person name="Nishi S."/>
            <person name="Hatada Y."/>
            <person name="Kawai S."/>
            <person name="Ito S."/>
            <person name="Horikoshi K."/>
        </authorList>
    </citation>
    <scope>NUCLEOTIDE SEQUENCE [LARGE SCALE GENOMIC DNA]</scope>
    <source>
        <strain>KSM-K16</strain>
    </source>
</reference>
<feature type="chain" id="PRO_0000102410" description="Endoribonuclease YbeY">
    <location>
        <begin position="1"/>
        <end position="160"/>
    </location>
</feature>
<feature type="binding site" evidence="1">
    <location>
        <position position="123"/>
    </location>
    <ligand>
        <name>Zn(2+)</name>
        <dbReference type="ChEBI" id="CHEBI:29105"/>
        <note>catalytic</note>
    </ligand>
</feature>
<feature type="binding site" evidence="1">
    <location>
        <position position="127"/>
    </location>
    <ligand>
        <name>Zn(2+)</name>
        <dbReference type="ChEBI" id="CHEBI:29105"/>
        <note>catalytic</note>
    </ligand>
</feature>
<feature type="binding site" evidence="1">
    <location>
        <position position="133"/>
    </location>
    <ligand>
        <name>Zn(2+)</name>
        <dbReference type="ChEBI" id="CHEBI:29105"/>
        <note>catalytic</note>
    </ligand>
</feature>
<dbReference type="EC" id="3.1.-.-" evidence="1"/>
<dbReference type="EMBL" id="AP006627">
    <property type="protein sequence ID" value="BAD64213.1"/>
    <property type="molecule type" value="Genomic_DNA"/>
</dbReference>
<dbReference type="RefSeq" id="WP_011246522.1">
    <property type="nucleotide sequence ID" value="NC_006582.1"/>
</dbReference>
<dbReference type="SMR" id="Q5WHE2"/>
<dbReference type="STRING" id="66692.ABC1678"/>
<dbReference type="KEGG" id="bcl:ABC1678"/>
<dbReference type="eggNOG" id="COG0319">
    <property type="taxonomic scope" value="Bacteria"/>
</dbReference>
<dbReference type="HOGENOM" id="CLU_106710_3_0_9"/>
<dbReference type="OrthoDB" id="9807740at2"/>
<dbReference type="Proteomes" id="UP000001168">
    <property type="component" value="Chromosome"/>
</dbReference>
<dbReference type="GO" id="GO:0005737">
    <property type="term" value="C:cytoplasm"/>
    <property type="evidence" value="ECO:0007669"/>
    <property type="project" value="UniProtKB-SubCell"/>
</dbReference>
<dbReference type="GO" id="GO:0004222">
    <property type="term" value="F:metalloendopeptidase activity"/>
    <property type="evidence" value="ECO:0007669"/>
    <property type="project" value="InterPro"/>
</dbReference>
<dbReference type="GO" id="GO:0004521">
    <property type="term" value="F:RNA endonuclease activity"/>
    <property type="evidence" value="ECO:0007669"/>
    <property type="project" value="UniProtKB-UniRule"/>
</dbReference>
<dbReference type="GO" id="GO:0008270">
    <property type="term" value="F:zinc ion binding"/>
    <property type="evidence" value="ECO:0007669"/>
    <property type="project" value="UniProtKB-UniRule"/>
</dbReference>
<dbReference type="GO" id="GO:0006364">
    <property type="term" value="P:rRNA processing"/>
    <property type="evidence" value="ECO:0007669"/>
    <property type="project" value="UniProtKB-UniRule"/>
</dbReference>
<dbReference type="Gene3D" id="3.40.390.30">
    <property type="entry name" value="Metalloproteases ('zincins'), catalytic domain"/>
    <property type="match status" value="1"/>
</dbReference>
<dbReference type="HAMAP" id="MF_00009">
    <property type="entry name" value="Endoribonucl_YbeY"/>
    <property type="match status" value="1"/>
</dbReference>
<dbReference type="InterPro" id="IPR023091">
    <property type="entry name" value="MetalPrtase_cat_dom_sf_prd"/>
</dbReference>
<dbReference type="InterPro" id="IPR002036">
    <property type="entry name" value="YbeY"/>
</dbReference>
<dbReference type="InterPro" id="IPR020549">
    <property type="entry name" value="YbeY_CS"/>
</dbReference>
<dbReference type="NCBIfam" id="TIGR00043">
    <property type="entry name" value="rRNA maturation RNase YbeY"/>
    <property type="match status" value="1"/>
</dbReference>
<dbReference type="PANTHER" id="PTHR46986">
    <property type="entry name" value="ENDORIBONUCLEASE YBEY, CHLOROPLASTIC"/>
    <property type="match status" value="1"/>
</dbReference>
<dbReference type="PANTHER" id="PTHR46986:SF1">
    <property type="entry name" value="ENDORIBONUCLEASE YBEY, CHLOROPLASTIC"/>
    <property type="match status" value="1"/>
</dbReference>
<dbReference type="Pfam" id="PF02130">
    <property type="entry name" value="YbeY"/>
    <property type="match status" value="1"/>
</dbReference>
<dbReference type="SUPFAM" id="SSF55486">
    <property type="entry name" value="Metalloproteases ('zincins'), catalytic domain"/>
    <property type="match status" value="1"/>
</dbReference>
<dbReference type="PROSITE" id="PS01306">
    <property type="entry name" value="UPF0054"/>
    <property type="match status" value="1"/>
</dbReference>
<proteinExistence type="inferred from homology"/>
<keyword id="KW-0963">Cytoplasm</keyword>
<keyword id="KW-0255">Endonuclease</keyword>
<keyword id="KW-0378">Hydrolase</keyword>
<keyword id="KW-0479">Metal-binding</keyword>
<keyword id="KW-0540">Nuclease</keyword>
<keyword id="KW-1185">Reference proteome</keyword>
<keyword id="KW-0690">Ribosome biogenesis</keyword>
<keyword id="KW-0698">rRNA processing</keyword>
<keyword id="KW-0862">Zinc</keyword>
<protein>
    <recommendedName>
        <fullName evidence="1">Endoribonuclease YbeY</fullName>
        <ecNumber evidence="1">3.1.-.-</ecNumber>
    </recommendedName>
</protein>
<sequence length="160" mass="18269">MIDVELNDEGQFLSSEQLQLVKDVLNHAAQEVSLSQQSEVSVTFTTEEDIHELNREHRGIDRPTDVLSFALNDETSDFDPTFHEELGLPNLLGDIVISVPHVERQAADYGHSFERELAFLVVHGFLHLLGYDHMNEEEEKQMFTKQEEILQSYGLGRSES</sequence>